<feature type="chain" id="PRO_0000108067" description="Uncharacterized protein in fgs 3'region">
    <location>
        <begin position="1"/>
        <end position="215"/>
    </location>
</feature>
<sequence>MTATVIFDLDGTLVNTEALYLKSNVKAAAVLGLHRTEADFRPLVGSAGPSEAKIIADLVGADHAAWFQQFSTQDVLDQIRSGADFVLPGADKTLQTLDQMGYRLALATSSAKHYVDVVLAATGWVKRFDPILTGSDVTAHKPDPEIYHVMKTKLPETPAIVVEDTHVGVAAAEGAGLPVVMIPGIGQGPDHKATAILAAAITDLPDWLQNHPTFA</sequence>
<comment type="similarity">
    <text evidence="1">Belongs to the HAD-like hydrolase superfamily. CbbY/CbbZ/Gph/YieH family.</text>
</comment>
<organism>
    <name type="scientific">Lacticaseibacillus casei</name>
    <name type="common">Lactobacillus casei</name>
    <dbReference type="NCBI Taxonomy" id="1582"/>
    <lineage>
        <taxon>Bacteria</taxon>
        <taxon>Bacillati</taxon>
        <taxon>Bacillota</taxon>
        <taxon>Bacilli</taxon>
        <taxon>Lactobacillales</taxon>
        <taxon>Lactobacillaceae</taxon>
        <taxon>Lacticaseibacillus</taxon>
    </lineage>
</organism>
<reference key="1">
    <citation type="journal article" date="1990" name="J. Biol. Chem.">
        <title>Cloning and expression of the gene encoding Lactobacillus casei folylpoly-gamma-glutamate synthetase in Escherichia coli and determination of its primary structure.</title>
        <authorList>
            <person name="Toy J."/>
            <person name="Bognar A.L."/>
        </authorList>
    </citation>
    <scope>NUCLEOTIDE SEQUENCE [GENOMIC DNA]</scope>
</reference>
<evidence type="ECO:0000305" key="1"/>
<proteinExistence type="inferred from homology"/>
<accession>P35924</accession>
<dbReference type="EMBL" id="J05221">
    <property type="protein sequence ID" value="AAA88211.1"/>
    <property type="molecule type" value="Genomic_DNA"/>
</dbReference>
<dbReference type="PIR" id="B35534">
    <property type="entry name" value="B35534"/>
</dbReference>
<dbReference type="SMR" id="P35924"/>
<dbReference type="STRING" id="1582.AAW28_03920"/>
<dbReference type="GO" id="GO:0005829">
    <property type="term" value="C:cytosol"/>
    <property type="evidence" value="ECO:0007669"/>
    <property type="project" value="TreeGrafter"/>
</dbReference>
<dbReference type="GO" id="GO:0008967">
    <property type="term" value="F:phosphoglycolate phosphatase activity"/>
    <property type="evidence" value="ECO:0007669"/>
    <property type="project" value="TreeGrafter"/>
</dbReference>
<dbReference type="GO" id="GO:0006281">
    <property type="term" value="P:DNA repair"/>
    <property type="evidence" value="ECO:0007669"/>
    <property type="project" value="TreeGrafter"/>
</dbReference>
<dbReference type="CDD" id="cd07505">
    <property type="entry name" value="HAD_BPGM-like"/>
    <property type="match status" value="1"/>
</dbReference>
<dbReference type="Gene3D" id="3.40.50.1000">
    <property type="entry name" value="HAD superfamily/HAD-like"/>
    <property type="match status" value="1"/>
</dbReference>
<dbReference type="Gene3D" id="1.10.150.240">
    <property type="entry name" value="Putative phosphatase, domain 2"/>
    <property type="match status" value="1"/>
</dbReference>
<dbReference type="InterPro" id="IPR050155">
    <property type="entry name" value="HAD-like_hydrolase_sf"/>
</dbReference>
<dbReference type="InterPro" id="IPR036412">
    <property type="entry name" value="HAD-like_sf"/>
</dbReference>
<dbReference type="InterPro" id="IPR006439">
    <property type="entry name" value="HAD-SF_hydro_IA"/>
</dbReference>
<dbReference type="InterPro" id="IPR041492">
    <property type="entry name" value="HAD_2"/>
</dbReference>
<dbReference type="InterPro" id="IPR023214">
    <property type="entry name" value="HAD_sf"/>
</dbReference>
<dbReference type="InterPro" id="IPR023198">
    <property type="entry name" value="PGP-like_dom2"/>
</dbReference>
<dbReference type="NCBIfam" id="TIGR01509">
    <property type="entry name" value="HAD-SF-IA-v3"/>
    <property type="match status" value="1"/>
</dbReference>
<dbReference type="PANTHER" id="PTHR43434">
    <property type="entry name" value="PHOSPHOGLYCOLATE PHOSPHATASE"/>
    <property type="match status" value="1"/>
</dbReference>
<dbReference type="PANTHER" id="PTHR43434:SF1">
    <property type="entry name" value="PHOSPHOGLYCOLATE PHOSPHATASE"/>
    <property type="match status" value="1"/>
</dbReference>
<dbReference type="Pfam" id="PF13419">
    <property type="entry name" value="HAD_2"/>
    <property type="match status" value="1"/>
</dbReference>
<dbReference type="PRINTS" id="PR00413">
    <property type="entry name" value="HADHALOGNASE"/>
</dbReference>
<dbReference type="SFLD" id="SFLDG01129">
    <property type="entry name" value="C1.5:_HAD__Beta-PGM__Phosphata"/>
    <property type="match status" value="1"/>
</dbReference>
<dbReference type="SFLD" id="SFLDS00003">
    <property type="entry name" value="Haloacid_Dehalogenase"/>
    <property type="match status" value="1"/>
</dbReference>
<dbReference type="SUPFAM" id="SSF56784">
    <property type="entry name" value="HAD-like"/>
    <property type="match status" value="1"/>
</dbReference>
<protein>
    <recommendedName>
        <fullName>Uncharacterized protein in fgs 3'region</fullName>
    </recommendedName>
</protein>
<name>YFGS_LACCA</name>